<proteinExistence type="inferred from homology"/>
<comment type="function">
    <text evidence="1">Together with the chaperonin GroEL, plays an essential role in assisting protein folding. The GroEL-GroES system forms a nano-cage that allows encapsulation of the non-native substrate proteins and provides a physical environment optimized to promote and accelerate protein folding. GroES binds to the apical surface of the GroEL ring, thereby capping the opening of the GroEL channel.</text>
</comment>
<comment type="subunit">
    <text evidence="1">Heptamer of 7 subunits arranged in a ring. Interacts with the chaperonin GroEL.</text>
</comment>
<comment type="subcellular location">
    <subcellularLocation>
        <location evidence="1">Cytoplasm</location>
    </subcellularLocation>
</comment>
<comment type="similarity">
    <text evidence="1">Belongs to the GroES chaperonin family.</text>
</comment>
<dbReference type="EMBL" id="AE003849">
    <property type="protein sequence ID" value="AAF83426.1"/>
    <property type="molecule type" value="Genomic_DNA"/>
</dbReference>
<dbReference type="PIR" id="G82783">
    <property type="entry name" value="G82783"/>
</dbReference>
<dbReference type="RefSeq" id="WP_004088683.1">
    <property type="nucleotide sequence ID" value="NC_002488.3"/>
</dbReference>
<dbReference type="SMR" id="P63773"/>
<dbReference type="STRING" id="160492.XF_0616"/>
<dbReference type="KEGG" id="xfa:XF_0616"/>
<dbReference type="eggNOG" id="COG0234">
    <property type="taxonomic scope" value="Bacteria"/>
</dbReference>
<dbReference type="HOGENOM" id="CLU_132825_2_0_6"/>
<dbReference type="Proteomes" id="UP000000812">
    <property type="component" value="Chromosome"/>
</dbReference>
<dbReference type="GO" id="GO:0005737">
    <property type="term" value="C:cytoplasm"/>
    <property type="evidence" value="ECO:0007669"/>
    <property type="project" value="UniProtKB-SubCell"/>
</dbReference>
<dbReference type="GO" id="GO:0005524">
    <property type="term" value="F:ATP binding"/>
    <property type="evidence" value="ECO:0007669"/>
    <property type="project" value="InterPro"/>
</dbReference>
<dbReference type="GO" id="GO:0046872">
    <property type="term" value="F:metal ion binding"/>
    <property type="evidence" value="ECO:0007669"/>
    <property type="project" value="TreeGrafter"/>
</dbReference>
<dbReference type="GO" id="GO:0044183">
    <property type="term" value="F:protein folding chaperone"/>
    <property type="evidence" value="ECO:0007669"/>
    <property type="project" value="InterPro"/>
</dbReference>
<dbReference type="GO" id="GO:0051087">
    <property type="term" value="F:protein-folding chaperone binding"/>
    <property type="evidence" value="ECO:0007669"/>
    <property type="project" value="TreeGrafter"/>
</dbReference>
<dbReference type="GO" id="GO:0051082">
    <property type="term" value="F:unfolded protein binding"/>
    <property type="evidence" value="ECO:0007669"/>
    <property type="project" value="TreeGrafter"/>
</dbReference>
<dbReference type="GO" id="GO:0051085">
    <property type="term" value="P:chaperone cofactor-dependent protein refolding"/>
    <property type="evidence" value="ECO:0007669"/>
    <property type="project" value="TreeGrafter"/>
</dbReference>
<dbReference type="CDD" id="cd00320">
    <property type="entry name" value="cpn10"/>
    <property type="match status" value="1"/>
</dbReference>
<dbReference type="FunFam" id="2.30.33.40:FF:000001">
    <property type="entry name" value="10 kDa chaperonin"/>
    <property type="match status" value="1"/>
</dbReference>
<dbReference type="Gene3D" id="2.30.33.40">
    <property type="entry name" value="GroES chaperonin"/>
    <property type="match status" value="1"/>
</dbReference>
<dbReference type="HAMAP" id="MF_00580">
    <property type="entry name" value="CH10"/>
    <property type="match status" value="1"/>
</dbReference>
<dbReference type="InterPro" id="IPR020818">
    <property type="entry name" value="Chaperonin_GroES"/>
</dbReference>
<dbReference type="InterPro" id="IPR037124">
    <property type="entry name" value="Chaperonin_GroES_sf"/>
</dbReference>
<dbReference type="InterPro" id="IPR018369">
    <property type="entry name" value="Chaprnonin_Cpn10_CS"/>
</dbReference>
<dbReference type="InterPro" id="IPR011032">
    <property type="entry name" value="GroES-like_sf"/>
</dbReference>
<dbReference type="NCBIfam" id="NF001527">
    <property type="entry name" value="PRK00364.1-2"/>
    <property type="match status" value="1"/>
</dbReference>
<dbReference type="NCBIfam" id="NF001531">
    <property type="entry name" value="PRK00364.2-2"/>
    <property type="match status" value="1"/>
</dbReference>
<dbReference type="NCBIfam" id="NF001533">
    <property type="entry name" value="PRK00364.2-4"/>
    <property type="match status" value="1"/>
</dbReference>
<dbReference type="PANTHER" id="PTHR10772">
    <property type="entry name" value="10 KDA HEAT SHOCK PROTEIN"/>
    <property type="match status" value="1"/>
</dbReference>
<dbReference type="PANTHER" id="PTHR10772:SF58">
    <property type="entry name" value="CO-CHAPERONIN GROES"/>
    <property type="match status" value="1"/>
</dbReference>
<dbReference type="Pfam" id="PF00166">
    <property type="entry name" value="Cpn10"/>
    <property type="match status" value="1"/>
</dbReference>
<dbReference type="PRINTS" id="PR00297">
    <property type="entry name" value="CHAPERONIN10"/>
</dbReference>
<dbReference type="SMART" id="SM00883">
    <property type="entry name" value="Cpn10"/>
    <property type="match status" value="1"/>
</dbReference>
<dbReference type="SUPFAM" id="SSF50129">
    <property type="entry name" value="GroES-like"/>
    <property type="match status" value="1"/>
</dbReference>
<dbReference type="PROSITE" id="PS00681">
    <property type="entry name" value="CHAPERONINS_CPN10"/>
    <property type="match status" value="1"/>
</dbReference>
<accession>P63773</accession>
<accession>Q9PFP1</accession>
<sequence>MSIKPLHDRIVVKPIEADEVSPGGIVIPDSAKEKSTKGEVIAVGAGKPLDNGNVRTPCVKVGEKVIYGQYAGSTYKAEGVEYKVLREDDILAIIG</sequence>
<feature type="chain" id="PRO_0000174907" description="Co-chaperonin GroES">
    <location>
        <begin position="1"/>
        <end position="95"/>
    </location>
</feature>
<organism>
    <name type="scientific">Xylella fastidiosa (strain 9a5c)</name>
    <dbReference type="NCBI Taxonomy" id="160492"/>
    <lineage>
        <taxon>Bacteria</taxon>
        <taxon>Pseudomonadati</taxon>
        <taxon>Pseudomonadota</taxon>
        <taxon>Gammaproteobacteria</taxon>
        <taxon>Lysobacterales</taxon>
        <taxon>Lysobacteraceae</taxon>
        <taxon>Xylella</taxon>
    </lineage>
</organism>
<name>CH10_XYLFA</name>
<gene>
    <name evidence="1" type="primary">groES</name>
    <name evidence="1" type="synonym">groS</name>
    <name type="ordered locus">XF_0616</name>
</gene>
<keyword id="KW-0143">Chaperone</keyword>
<keyword id="KW-0963">Cytoplasm</keyword>
<evidence type="ECO:0000255" key="1">
    <source>
        <dbReference type="HAMAP-Rule" id="MF_00580"/>
    </source>
</evidence>
<reference key="1">
    <citation type="journal article" date="2000" name="Nature">
        <title>The genome sequence of the plant pathogen Xylella fastidiosa.</title>
        <authorList>
            <person name="Simpson A.J.G."/>
            <person name="Reinach F.C."/>
            <person name="Arruda P."/>
            <person name="Abreu F.A."/>
            <person name="Acencio M."/>
            <person name="Alvarenga R."/>
            <person name="Alves L.M.C."/>
            <person name="Araya J.E."/>
            <person name="Baia G.S."/>
            <person name="Baptista C.S."/>
            <person name="Barros M.H."/>
            <person name="Bonaccorsi E.D."/>
            <person name="Bordin S."/>
            <person name="Bove J.M."/>
            <person name="Briones M.R.S."/>
            <person name="Bueno M.R.P."/>
            <person name="Camargo A.A."/>
            <person name="Camargo L.E.A."/>
            <person name="Carraro D.M."/>
            <person name="Carrer H."/>
            <person name="Colauto N.B."/>
            <person name="Colombo C."/>
            <person name="Costa F.F."/>
            <person name="Costa M.C.R."/>
            <person name="Costa-Neto C.M."/>
            <person name="Coutinho L.L."/>
            <person name="Cristofani M."/>
            <person name="Dias-Neto E."/>
            <person name="Docena C."/>
            <person name="El-Dorry H."/>
            <person name="Facincani A.P."/>
            <person name="Ferreira A.J.S."/>
            <person name="Ferreira V.C.A."/>
            <person name="Ferro J.A."/>
            <person name="Fraga J.S."/>
            <person name="Franca S.C."/>
            <person name="Franco M.C."/>
            <person name="Frohme M."/>
            <person name="Furlan L.R."/>
            <person name="Garnier M."/>
            <person name="Goldman G.H."/>
            <person name="Goldman M.H.S."/>
            <person name="Gomes S.L."/>
            <person name="Gruber A."/>
            <person name="Ho P.L."/>
            <person name="Hoheisel J.D."/>
            <person name="Junqueira M.L."/>
            <person name="Kemper E.L."/>
            <person name="Kitajima J.P."/>
            <person name="Krieger J.E."/>
            <person name="Kuramae E.E."/>
            <person name="Laigret F."/>
            <person name="Lambais M.R."/>
            <person name="Leite L.C.C."/>
            <person name="Lemos E.G.M."/>
            <person name="Lemos M.V.F."/>
            <person name="Lopes S.A."/>
            <person name="Lopes C.R."/>
            <person name="Machado J.A."/>
            <person name="Machado M.A."/>
            <person name="Madeira A.M.B.N."/>
            <person name="Madeira H.M.F."/>
            <person name="Marino C.L."/>
            <person name="Marques M.V."/>
            <person name="Martins E.A.L."/>
            <person name="Martins E.M.F."/>
            <person name="Matsukuma A.Y."/>
            <person name="Menck C.F.M."/>
            <person name="Miracca E.C."/>
            <person name="Miyaki C.Y."/>
            <person name="Monteiro-Vitorello C.B."/>
            <person name="Moon D.H."/>
            <person name="Nagai M.A."/>
            <person name="Nascimento A.L.T.O."/>
            <person name="Netto L.E.S."/>
            <person name="Nhani A. Jr."/>
            <person name="Nobrega F.G."/>
            <person name="Nunes L.R."/>
            <person name="Oliveira M.A."/>
            <person name="de Oliveira M.C."/>
            <person name="de Oliveira R.C."/>
            <person name="Palmieri D.A."/>
            <person name="Paris A."/>
            <person name="Peixoto B.R."/>
            <person name="Pereira G.A.G."/>
            <person name="Pereira H.A. Jr."/>
            <person name="Pesquero J.B."/>
            <person name="Quaggio R.B."/>
            <person name="Roberto P.G."/>
            <person name="Rodrigues V."/>
            <person name="de Rosa A.J.M."/>
            <person name="de Rosa V.E. Jr."/>
            <person name="de Sa R.G."/>
            <person name="Santelli R.V."/>
            <person name="Sawasaki H.E."/>
            <person name="da Silva A.C.R."/>
            <person name="da Silva A.M."/>
            <person name="da Silva F.R."/>
            <person name="Silva W.A. Jr."/>
            <person name="da Silveira J.F."/>
            <person name="Silvestri M.L.Z."/>
            <person name="Siqueira W.J."/>
            <person name="de Souza A.A."/>
            <person name="de Souza A.P."/>
            <person name="Terenzi M.F."/>
            <person name="Truffi D."/>
            <person name="Tsai S.M."/>
            <person name="Tsuhako M.H."/>
            <person name="Vallada H."/>
            <person name="Van Sluys M.A."/>
            <person name="Verjovski-Almeida S."/>
            <person name="Vettore A.L."/>
            <person name="Zago M.A."/>
            <person name="Zatz M."/>
            <person name="Meidanis J."/>
            <person name="Setubal J.C."/>
        </authorList>
    </citation>
    <scope>NUCLEOTIDE SEQUENCE [LARGE SCALE GENOMIC DNA]</scope>
    <source>
        <strain>9a5c</strain>
    </source>
</reference>
<protein>
    <recommendedName>
        <fullName evidence="1">Co-chaperonin GroES</fullName>
    </recommendedName>
    <alternativeName>
        <fullName evidence="1">10 kDa chaperonin</fullName>
    </alternativeName>
    <alternativeName>
        <fullName evidence="1">Chaperonin-10</fullName>
        <shortName evidence="1">Cpn10</shortName>
    </alternativeName>
</protein>